<name>HYLB_CUTAC</name>
<proteinExistence type="evidence at protein level"/>
<reference key="1">
    <citation type="journal article" date="1997" name="Can. J. Microbiol.">
        <title>Cloning and sequencing of the hyaluronate lyase gene from Propionibacterium acnes.</title>
        <authorList>
            <person name="Steiner B.M."/>
            <person name="Romero-Steiner S."/>
            <person name="Cruce D."/>
            <person name="George R."/>
        </authorList>
    </citation>
    <scope>NUCLEOTIDE SEQUENCE [GENOMIC DNA]</scope>
    <scope>PARTIAL PROTEIN SEQUENCE</scope>
    <source>
        <strain>49/51</strain>
    </source>
</reference>
<reference key="2">
    <citation type="journal article" date="2023" name="Nat. Commun.">
        <title>Functional divergence of a bacterial enzyme promotes healthy or acneic skin.</title>
        <authorList>
            <person name="Hajam I.A."/>
            <person name="Katiki M."/>
            <person name="McNally R."/>
            <person name="Lazaro-Diez M."/>
            <person name="Kolar S."/>
            <person name="Chatterjee A."/>
            <person name="Gonzalez C."/>
            <person name="Paulchakrabarti M."/>
            <person name="Choudhury B."/>
            <person name="Caldera J.R."/>
            <person name="Desmond T."/>
            <person name="Tsai C.M."/>
            <person name="Du X."/>
            <person name="Li H."/>
            <person name="Murali R."/>
            <person name="Liu G.Y."/>
        </authorList>
    </citation>
    <scope>X-RAY CRYSTALLOGRAPHY (2.10 ANGSTROMS) OF 37-800 OF WILD-TYPE AND MUTANT PHE-281</scope>
    <scope>FUNCTION</scope>
    <scope>CATALYTIC ACTIVITY</scope>
    <scope>SUBCELLULAR LOCATION</scope>
    <scope>DISRUPTION PHENOTYPE</scope>
    <scope>ACTIVE SITE</scope>
    <scope>MUTAGENESIS OF ARG-62; ARG-109; GLU-112; TYR-281; ASN-341; GLU-342; MET-357; LEU-386; SER-390; VAL-393; PHE-398 AND ARG-406</scope>
    <source>
        <strain evidence="5">HL110PA3</strain>
        <strain evidence="5">HL110PA4</strain>
    </source>
</reference>
<dbReference type="EC" id="4.2.2.1" evidence="3"/>
<dbReference type="EMBL" id="U15927">
    <property type="protein sequence ID" value="AAA51650.1"/>
    <property type="status" value="ALT_FRAME"/>
    <property type="molecule type" value="Genomic_DNA"/>
</dbReference>
<dbReference type="PDB" id="8FNX">
    <property type="method" value="X-ray"/>
    <property type="resolution" value="2.10 A"/>
    <property type="chains" value="A=37-800"/>
</dbReference>
<dbReference type="PDB" id="8G0O">
    <property type="method" value="X-ray"/>
    <property type="resolution" value="2.10 A"/>
    <property type="chains" value="A/B=37-800"/>
</dbReference>
<dbReference type="PDBsum" id="8FNX"/>
<dbReference type="PDBsum" id="8G0O"/>
<dbReference type="SMR" id="P0CZ00"/>
<dbReference type="CAZy" id="PL8">
    <property type="family name" value="Polysaccharide Lyase Family 8"/>
</dbReference>
<dbReference type="GO" id="GO:0005576">
    <property type="term" value="C:extracellular region"/>
    <property type="evidence" value="ECO:0000314"/>
    <property type="project" value="UniProtKB"/>
</dbReference>
<dbReference type="GO" id="GO:0030246">
    <property type="term" value="F:carbohydrate binding"/>
    <property type="evidence" value="ECO:0007669"/>
    <property type="project" value="InterPro"/>
</dbReference>
<dbReference type="GO" id="GO:0030340">
    <property type="term" value="F:hyaluronate lyase activity"/>
    <property type="evidence" value="ECO:0000314"/>
    <property type="project" value="UniProtKB"/>
</dbReference>
<dbReference type="GO" id="GO:0005975">
    <property type="term" value="P:carbohydrate metabolic process"/>
    <property type="evidence" value="ECO:0007669"/>
    <property type="project" value="InterPro"/>
</dbReference>
<dbReference type="CDD" id="cd01083">
    <property type="entry name" value="GAG_Lyase"/>
    <property type="match status" value="1"/>
</dbReference>
<dbReference type="Gene3D" id="2.70.98.10">
    <property type="match status" value="1"/>
</dbReference>
<dbReference type="Gene3D" id="1.50.10.100">
    <property type="entry name" value="Chondroitin AC/alginate lyase"/>
    <property type="match status" value="1"/>
</dbReference>
<dbReference type="Gene3D" id="2.60.220.10">
    <property type="entry name" value="Polysaccharide lyase family 8-like, C-terminal"/>
    <property type="match status" value="1"/>
</dbReference>
<dbReference type="InterPro" id="IPR008929">
    <property type="entry name" value="Chondroitin_lyas"/>
</dbReference>
<dbReference type="InterPro" id="IPR011013">
    <property type="entry name" value="Gal_mutarotase_sf_dom"/>
</dbReference>
<dbReference type="InterPro" id="IPR014718">
    <property type="entry name" value="GH-type_carb-bd"/>
</dbReference>
<dbReference type="InterPro" id="IPR038970">
    <property type="entry name" value="Lyase_8"/>
</dbReference>
<dbReference type="InterPro" id="IPR011071">
    <property type="entry name" value="Lyase_8-like_C"/>
</dbReference>
<dbReference type="InterPro" id="IPR012970">
    <property type="entry name" value="Lyase_8_alpha_N"/>
</dbReference>
<dbReference type="InterPro" id="IPR003159">
    <property type="entry name" value="Lyase_8_central_dom"/>
</dbReference>
<dbReference type="InterPro" id="IPR006311">
    <property type="entry name" value="TAT_signal"/>
</dbReference>
<dbReference type="PANTHER" id="PTHR38481">
    <property type="entry name" value="HYALURONATE LYASE"/>
    <property type="match status" value="1"/>
</dbReference>
<dbReference type="PANTHER" id="PTHR38481:SF1">
    <property type="entry name" value="HYALURONATE LYASE"/>
    <property type="match status" value="1"/>
</dbReference>
<dbReference type="Pfam" id="PF02278">
    <property type="entry name" value="Lyase_8"/>
    <property type="match status" value="1"/>
</dbReference>
<dbReference type="Pfam" id="PF08124">
    <property type="entry name" value="Lyase_8_N"/>
    <property type="match status" value="1"/>
</dbReference>
<dbReference type="SUPFAM" id="SSF48230">
    <property type="entry name" value="Chondroitin AC/alginate lyase"/>
    <property type="match status" value="1"/>
</dbReference>
<dbReference type="SUPFAM" id="SSF74650">
    <property type="entry name" value="Galactose mutarotase-like"/>
    <property type="match status" value="1"/>
</dbReference>
<dbReference type="SUPFAM" id="SSF49863">
    <property type="entry name" value="Hyaluronate lyase-like, C-terminal domain"/>
    <property type="match status" value="1"/>
</dbReference>
<dbReference type="PROSITE" id="PS51318">
    <property type="entry name" value="TAT"/>
    <property type="match status" value="1"/>
</dbReference>
<evidence type="ECO:0000250" key="1">
    <source>
        <dbReference type="UniProtKB" id="Q54873"/>
    </source>
</evidence>
<evidence type="ECO:0000255" key="2">
    <source>
        <dbReference type="PROSITE-ProRule" id="PRU00648"/>
    </source>
</evidence>
<evidence type="ECO:0000269" key="3">
    <source>
    </source>
</evidence>
<evidence type="ECO:0000269" key="4">
    <source>
    </source>
</evidence>
<evidence type="ECO:0000303" key="5">
    <source>
    </source>
</evidence>
<evidence type="ECO:0000303" key="6">
    <source>
    </source>
</evidence>
<evidence type="ECO:0000305" key="7"/>
<evidence type="ECO:0000305" key="8">
    <source>
    </source>
</evidence>
<keyword id="KW-0002">3D-structure</keyword>
<keyword id="KW-0903">Direct protein sequencing</keyword>
<keyword id="KW-0456">Lyase</keyword>
<keyword id="KW-0964">Secreted</keyword>
<keyword id="KW-0732">Signal</keyword>
<protein>
    <recommendedName>
        <fullName evidence="5">Hyaluronate lyase HylB</fullName>
        <ecNumber evidence="3">4.2.2.1</ecNumber>
    </recommendedName>
    <alternativeName>
        <fullName evidence="6">Hyaluronate lyase</fullName>
    </alternativeName>
    <alternativeName>
        <fullName evidence="5 6">Hyaluronidase</fullName>
        <shortName>HYase</shortName>
    </alternativeName>
</protein>
<comment type="function">
    <text evidence="3">Degrades hyaluronic acid (HA) exclusively into HA disaccharides (HA-2). Produced HA-2s confer anti-inflammatory properties leading to reduced immunopathology in the mouse model of acne.</text>
</comment>
<comment type="catalytic activity">
    <reaction evidence="3">
        <text>[hyaluronan](n) = n 3-(4-deoxy-beta-D-gluc-4-enuronosyl)-N-acetyl-D-glucosamine + H2O</text>
        <dbReference type="Rhea" id="RHEA:50240"/>
        <dbReference type="Rhea" id="RHEA-COMP:12583"/>
        <dbReference type="ChEBI" id="CHEBI:15377"/>
        <dbReference type="ChEBI" id="CHEBI:132151"/>
        <dbReference type="ChEBI" id="CHEBI:132153"/>
        <dbReference type="EC" id="4.2.2.1"/>
    </reaction>
</comment>
<comment type="subcellular location">
    <subcellularLocation>
        <location evidence="3 8">Secreted</location>
    </subcellularLocation>
</comment>
<comment type="PTM">
    <text evidence="2 4">Predicted to be exported by the Tat system. The position of the signal peptide cleavage has been experimentally proven.</text>
</comment>
<comment type="disruption phenotype">
    <text evidence="3">Loss of hyaluronic acid (HA)-degrading activity. A slight increase in skin pathology and production of proinflammatory cytokines in the mouse model of acne.</text>
</comment>
<comment type="similarity">
    <text evidence="7">Belongs to the polysaccharide lyase 8 family.</text>
</comment>
<comment type="sequence caution" evidence="7">
    <conflict type="frameshift">
        <sequence resource="EMBL-CDS" id="AAA51650"/>
    </conflict>
</comment>
<sequence>MFGTPSRRTFLTASALSAMALAASPTVTDAIAAPGPDSWSALCERWIDIITGRRAARTSDPRARAIIAKTDRKVAEILTDLVSGSSRQTVLISADLRKEQSPFITKTARAIESMACGWATPGSSYHKDPEILSACIEGLRDFCRLRYNPSQDEYGNWWDWEDGASRAVADVMCILHDVLPPEVMSAAAAGIDHFIPDPWFQQPGSVKPTANPVQPVVSTGANRMDLTRAVMCRSIATGDEKRLRHAVDGLPDAWRVTTEGDGFRADGGFIQHSHIPYTGGYGDVLFSGLAMLFPLVSGMRFDIDESARKAFHDQVERGFIPVMYNGQILDDVRGRSISRINESAAMHGISIARAMLMMADALPTHRAEQWRGIVHGWMARNTFDHLSEPSTLVDISLFDAAAKAPRPGVVDAELLRVHGPSRPATADWLITVSNCSDRIAWYEYGNGENEWAYRTSQGMRYLLLPGDMGQYEDGYWATVDYSAPTGTTVDSTPLKRAVGASWAAKTPTNEWSGGLASGSWSAAASHITSQDSALKARRLWVGLKDAMVELTTDVTTDASRAITVVEHRKVASSSTKLLVDGNRVSSATSFQNPRWAHLDGVGGYVFATDTDLSADVATRKGTWIDVNPSRKVKGADEVIERAYASLHGHPPRSSSPWALLPTASRSHTMALATRPGVEPFTVLRNDGNRPGRASAGALLTKDPTVVTTLAFWKPATCGGVAVNRPALVQTRESANQMEVVIVEPTQKRGSLTVTIEGSWKVKTADSHVDVSCENAAGTLHVDTAGLGGQSVRVTLARQVTQTPSGGGRHDRA</sequence>
<organism>
    <name type="scientific">Cutibacterium acnes</name>
    <name type="common">Propionibacterium acnes</name>
    <dbReference type="NCBI Taxonomy" id="1747"/>
    <lineage>
        <taxon>Bacteria</taxon>
        <taxon>Bacillati</taxon>
        <taxon>Actinomycetota</taxon>
        <taxon>Actinomycetes</taxon>
        <taxon>Propionibacteriales</taxon>
        <taxon>Propionibacteriaceae</taxon>
        <taxon>Cutibacterium</taxon>
    </lineage>
</organism>
<gene>
    <name evidence="5" type="primary">hylB</name>
</gene>
<accession>P0CZ00</accession>
<accession>Q59634</accession>
<accession>Q6AAT4</accession>
<feature type="signal peptide" description="Tat-type signal" evidence="4">
    <location>
        <begin position="1"/>
        <end position="32"/>
    </location>
</feature>
<feature type="chain" id="PRO_0000410486" description="Hyaluronate lyase HylB">
    <location>
        <begin position="33"/>
        <end position="812"/>
    </location>
</feature>
<feature type="active site" evidence="1">
    <location>
        <position position="222"/>
    </location>
</feature>
<feature type="active site" evidence="1">
    <location>
        <position position="272"/>
    </location>
</feature>
<feature type="active site" evidence="3">
    <location>
        <position position="281"/>
    </location>
</feature>
<feature type="mutagenesis site" description="Reduced catalytic activity." evidence="3">
    <original>R</original>
    <variation>D</variation>
    <location>
        <position position="62"/>
    </location>
</feature>
<feature type="mutagenesis site" description="Significantly reduced catalytic activity." evidence="3">
    <original>R</original>
    <variation>A</variation>
    <location>
        <position position="109"/>
    </location>
</feature>
<feature type="mutagenesis site" description="Reduced catalytic activity." evidence="3">
    <original>E</original>
    <variation>S</variation>
    <location>
        <position position="112"/>
    </location>
</feature>
<feature type="mutagenesis site" description="Loss of catalytic activity." evidence="3">
    <original>Y</original>
    <variation>F</variation>
    <location>
        <position position="281"/>
    </location>
</feature>
<feature type="mutagenesis site" description="Increased catalytic activity." evidence="3">
    <original>N</original>
    <variation>D</variation>
    <location>
        <position position="341"/>
    </location>
</feature>
<feature type="mutagenesis site" description="No significant effect on catalytic activity." evidence="3">
    <original>M</original>
    <variation>L</variation>
    <location>
        <position position="357"/>
    </location>
</feature>
<feature type="mutagenesis site" description="No significant effect on catalytic activity." evidence="3">
    <original>L</original>
    <variation>A</variation>
    <location>
        <position position="386"/>
    </location>
</feature>
<feature type="mutagenesis site" description="Reduced catalytic activity." evidence="3">
    <original>S</original>
    <variation>P</variation>
    <location>
        <position position="390"/>
    </location>
</feature>
<feature type="mutagenesis site" description="Significantly reduced catalytic activity." evidence="3">
    <original>V</original>
    <variation>R</variation>
    <location>
        <position position="393"/>
    </location>
</feature>
<feature type="mutagenesis site" description="No significant effect on catalytic activity." evidence="3">
    <original>F</original>
    <variation>A</variation>
    <location>
        <position position="398"/>
    </location>
</feature>
<feature type="mutagenesis site" description="Reduced catalytic activity." evidence="3">
    <original>R</original>
    <variation>A</variation>
    <location>
        <position position="406"/>
    </location>
</feature>